<evidence type="ECO:0000250" key="1">
    <source>
        <dbReference type="UniProtKB" id="Q9P003"/>
    </source>
</evidence>
<evidence type="ECO:0000255" key="2"/>
<evidence type="ECO:0000305" key="3"/>
<sequence length="139" mass="16093">MEAVVFVFSLLDCCALIFLSVYFIITLSDLECDYINARSCCSKLNKWVIPELIGHTIVTVLLLMSLHWFIFLLNLPVATWNIYRYIMVPSGNMGVFDPTEIHNRGQLKSHMKEAMIKLGFHLLCFFMYLYSMILALIND</sequence>
<keyword id="KW-0256">Endoplasmic reticulum</keyword>
<keyword id="KW-0931">ER-Golgi transport</keyword>
<keyword id="KW-0472">Membrane</keyword>
<keyword id="KW-0653">Protein transport</keyword>
<keyword id="KW-1185">Reference proteome</keyword>
<keyword id="KW-0812">Transmembrane</keyword>
<keyword id="KW-1133">Transmembrane helix</keyword>
<keyword id="KW-0813">Transport</keyword>
<protein>
    <recommendedName>
        <fullName>Protein cornichon homolog 4</fullName>
        <shortName>CNIH-4</shortName>
    </recommendedName>
    <alternativeName>
        <fullName>Cornichon family AMPA receptor auxiliary protein 4</fullName>
    </alternativeName>
</protein>
<name>CNIH4_PONAB</name>
<gene>
    <name type="primary">CNIH4</name>
</gene>
<reference key="1">
    <citation type="submission" date="2004-11" db="EMBL/GenBank/DDBJ databases">
        <authorList>
            <consortium name="The German cDNA consortium"/>
        </authorList>
    </citation>
    <scope>NUCLEOTIDE SEQUENCE [LARGE SCALE MRNA]</scope>
    <source>
        <tissue>Heart</tissue>
    </source>
</reference>
<comment type="function">
    <text evidence="1">Involved in G protein-coupled receptors (GPCRs) trafficking from the endoplasmic reticulum to the cell surface; it promotes the exit of GPCRs from the early secretory pathway, likely through interaction with the COPII machinery.</text>
</comment>
<comment type="subunit">
    <text evidence="1">Interacts with Sec23/24 complex components SEC24B and SEC24D (By similarity). Interacts with CCR5 (By similarity). Interacts with ADRB2 in the early secretory pathway (By similarity).</text>
</comment>
<comment type="subcellular location">
    <subcellularLocation>
        <location evidence="3">Membrane</location>
        <topology evidence="3">Multi-pass membrane protein</topology>
    </subcellularLocation>
    <subcellularLocation>
        <location evidence="1">Endoplasmic reticulum</location>
    </subcellularLocation>
    <subcellularLocation>
        <location evidence="1">Endoplasmic reticulum-Golgi intermediate compartment</location>
    </subcellularLocation>
</comment>
<comment type="similarity">
    <text evidence="3">Belongs to the cornichon family.</text>
</comment>
<organism>
    <name type="scientific">Pongo abelii</name>
    <name type="common">Sumatran orangutan</name>
    <name type="synonym">Pongo pygmaeus abelii</name>
    <dbReference type="NCBI Taxonomy" id="9601"/>
    <lineage>
        <taxon>Eukaryota</taxon>
        <taxon>Metazoa</taxon>
        <taxon>Chordata</taxon>
        <taxon>Craniata</taxon>
        <taxon>Vertebrata</taxon>
        <taxon>Euteleostomi</taxon>
        <taxon>Mammalia</taxon>
        <taxon>Eutheria</taxon>
        <taxon>Euarchontoglires</taxon>
        <taxon>Primates</taxon>
        <taxon>Haplorrhini</taxon>
        <taxon>Catarrhini</taxon>
        <taxon>Hominidae</taxon>
        <taxon>Pongo</taxon>
    </lineage>
</organism>
<dbReference type="EMBL" id="CR859362">
    <property type="protein sequence ID" value="CAH91536.1"/>
    <property type="molecule type" value="mRNA"/>
</dbReference>
<dbReference type="RefSeq" id="NP_001125902.1">
    <property type="nucleotide sequence ID" value="NM_001132430.1"/>
</dbReference>
<dbReference type="SMR" id="Q5R9M4"/>
<dbReference type="FunCoup" id="Q5R9M4">
    <property type="interactions" value="1664"/>
</dbReference>
<dbReference type="STRING" id="9601.ENSPPYP00000000183"/>
<dbReference type="GeneID" id="100172835"/>
<dbReference type="KEGG" id="pon:100172835"/>
<dbReference type="CTD" id="29097"/>
<dbReference type="eggNOG" id="KOG2729">
    <property type="taxonomic scope" value="Eukaryota"/>
</dbReference>
<dbReference type="InParanoid" id="Q5R9M4"/>
<dbReference type="OrthoDB" id="8775810at2759"/>
<dbReference type="Proteomes" id="UP000001595">
    <property type="component" value="Unplaced"/>
</dbReference>
<dbReference type="GO" id="GO:0005783">
    <property type="term" value="C:endoplasmic reticulum"/>
    <property type="evidence" value="ECO:0000250"/>
    <property type="project" value="UniProtKB"/>
</dbReference>
<dbReference type="GO" id="GO:0005793">
    <property type="term" value="C:endoplasmic reticulum-Golgi intermediate compartment"/>
    <property type="evidence" value="ECO:0000250"/>
    <property type="project" value="UniProtKB"/>
</dbReference>
<dbReference type="GO" id="GO:0016020">
    <property type="term" value="C:membrane"/>
    <property type="evidence" value="ECO:0007669"/>
    <property type="project" value="UniProtKB-SubCell"/>
</dbReference>
<dbReference type="GO" id="GO:0006888">
    <property type="term" value="P:endoplasmic reticulum to Golgi vesicle-mediated transport"/>
    <property type="evidence" value="ECO:0000250"/>
    <property type="project" value="UniProtKB"/>
</dbReference>
<dbReference type="GO" id="GO:0015031">
    <property type="term" value="P:protein transport"/>
    <property type="evidence" value="ECO:0007669"/>
    <property type="project" value="UniProtKB-KW"/>
</dbReference>
<dbReference type="InterPro" id="IPR003377">
    <property type="entry name" value="Cornichon"/>
</dbReference>
<dbReference type="PANTHER" id="PTHR12290">
    <property type="entry name" value="CORNICHON-RELATED"/>
    <property type="match status" value="1"/>
</dbReference>
<dbReference type="Pfam" id="PF03311">
    <property type="entry name" value="Cornichon"/>
    <property type="match status" value="1"/>
</dbReference>
<dbReference type="SMART" id="SM01398">
    <property type="entry name" value="Cornichon"/>
    <property type="match status" value="1"/>
</dbReference>
<accession>Q5R9M4</accession>
<proteinExistence type="evidence at transcript level"/>
<feature type="chain" id="PRO_0000122232" description="Protein cornichon homolog 4">
    <location>
        <begin position="1"/>
        <end position="139"/>
    </location>
</feature>
<feature type="transmembrane region" description="Helical" evidence="2">
    <location>
        <begin position="5"/>
        <end position="25"/>
    </location>
</feature>
<feature type="transmembrane region" description="Helical" evidence="2">
    <location>
        <begin position="57"/>
        <end position="77"/>
    </location>
</feature>
<feature type="transmembrane region" description="Helical" evidence="2">
    <location>
        <begin position="118"/>
        <end position="138"/>
    </location>
</feature>